<gene>
    <name evidence="1" type="primary">SLX4</name>
    <name type="ORF">UREG_01755</name>
</gene>
<dbReference type="EMBL" id="CH476615">
    <property type="protein sequence ID" value="EEP76906.1"/>
    <property type="molecule type" value="Genomic_DNA"/>
</dbReference>
<dbReference type="RefSeq" id="XP_002542239.1">
    <property type="nucleotide sequence ID" value="XM_002542193.1"/>
</dbReference>
<dbReference type="SMR" id="C4JJE8"/>
<dbReference type="STRING" id="336963.C4JJE8"/>
<dbReference type="GeneID" id="8443808"/>
<dbReference type="KEGG" id="ure:UREG_01755"/>
<dbReference type="VEuPathDB" id="FungiDB:UREG_01755"/>
<dbReference type="eggNOG" id="ENOG502SEB3">
    <property type="taxonomic scope" value="Eukaryota"/>
</dbReference>
<dbReference type="HOGENOM" id="CLU_016773_0_0_1"/>
<dbReference type="InParanoid" id="C4JJE8"/>
<dbReference type="OMA" id="SICCLWK"/>
<dbReference type="OrthoDB" id="5349119at2759"/>
<dbReference type="Proteomes" id="UP000002058">
    <property type="component" value="Unassembled WGS sequence"/>
</dbReference>
<dbReference type="GO" id="GO:0033557">
    <property type="term" value="C:Slx1-Slx4 complex"/>
    <property type="evidence" value="ECO:0007669"/>
    <property type="project" value="UniProtKB-UniRule"/>
</dbReference>
<dbReference type="GO" id="GO:0017108">
    <property type="term" value="F:5'-flap endonuclease activity"/>
    <property type="evidence" value="ECO:0007669"/>
    <property type="project" value="InterPro"/>
</dbReference>
<dbReference type="GO" id="GO:0006310">
    <property type="term" value="P:DNA recombination"/>
    <property type="evidence" value="ECO:0007669"/>
    <property type="project" value="UniProtKB-UniRule"/>
</dbReference>
<dbReference type="GO" id="GO:0006281">
    <property type="term" value="P:DNA repair"/>
    <property type="evidence" value="ECO:0007669"/>
    <property type="project" value="UniProtKB-UniRule"/>
</dbReference>
<dbReference type="GO" id="GO:0006260">
    <property type="term" value="P:DNA replication"/>
    <property type="evidence" value="ECO:0007669"/>
    <property type="project" value="InterPro"/>
</dbReference>
<dbReference type="CDD" id="cd22999">
    <property type="entry name" value="SAP_SLX4"/>
    <property type="match status" value="1"/>
</dbReference>
<dbReference type="HAMAP" id="MF_03110">
    <property type="entry name" value="Endonuc_su_Slx4"/>
    <property type="match status" value="1"/>
</dbReference>
<dbReference type="InterPro" id="IPR027784">
    <property type="entry name" value="Slx4_ascomycetes"/>
</dbReference>
<dbReference type="InterPro" id="IPR018574">
    <property type="entry name" value="Structure-sp_endonuc_su_Slx4"/>
</dbReference>
<dbReference type="Pfam" id="PF09494">
    <property type="entry name" value="Slx4"/>
    <property type="match status" value="1"/>
</dbReference>
<evidence type="ECO:0000255" key="1">
    <source>
        <dbReference type="HAMAP-Rule" id="MF_03110"/>
    </source>
</evidence>
<evidence type="ECO:0000256" key="2">
    <source>
        <dbReference type="SAM" id="MobiDB-lite"/>
    </source>
</evidence>
<organism>
    <name type="scientific">Uncinocarpus reesii (strain UAMH 1704)</name>
    <dbReference type="NCBI Taxonomy" id="336963"/>
    <lineage>
        <taxon>Eukaryota</taxon>
        <taxon>Fungi</taxon>
        <taxon>Dikarya</taxon>
        <taxon>Ascomycota</taxon>
        <taxon>Pezizomycotina</taxon>
        <taxon>Eurotiomycetes</taxon>
        <taxon>Eurotiomycetidae</taxon>
        <taxon>Onygenales</taxon>
        <taxon>Onygenaceae</taxon>
        <taxon>Uncinocarpus</taxon>
    </lineage>
</organism>
<feature type="chain" id="PRO_0000388049" description="Structure-specific endonuclease subunit SLX4">
    <location>
        <begin position="1"/>
        <end position="818"/>
    </location>
</feature>
<feature type="region of interest" description="Disordered" evidence="2">
    <location>
        <begin position="1"/>
        <end position="39"/>
    </location>
</feature>
<feature type="region of interest" description="Disordered" evidence="2">
    <location>
        <begin position="53"/>
        <end position="151"/>
    </location>
</feature>
<feature type="region of interest" description="Disordered" evidence="2">
    <location>
        <begin position="279"/>
        <end position="324"/>
    </location>
</feature>
<feature type="region of interest" description="Disordered" evidence="2">
    <location>
        <begin position="413"/>
        <end position="437"/>
    </location>
</feature>
<feature type="region of interest" description="Disordered" evidence="2">
    <location>
        <begin position="587"/>
        <end position="712"/>
    </location>
</feature>
<feature type="compositionally biased region" description="Low complexity" evidence="2">
    <location>
        <begin position="28"/>
        <end position="39"/>
    </location>
</feature>
<feature type="compositionally biased region" description="Basic and acidic residues" evidence="2">
    <location>
        <begin position="90"/>
        <end position="103"/>
    </location>
</feature>
<feature type="compositionally biased region" description="Low complexity" evidence="2">
    <location>
        <begin position="306"/>
        <end position="316"/>
    </location>
</feature>
<feature type="compositionally biased region" description="Polar residues" evidence="2">
    <location>
        <begin position="426"/>
        <end position="437"/>
    </location>
</feature>
<feature type="compositionally biased region" description="Basic and acidic residues" evidence="2">
    <location>
        <begin position="604"/>
        <end position="618"/>
    </location>
</feature>
<feature type="compositionally biased region" description="Polar residues" evidence="2">
    <location>
        <begin position="621"/>
        <end position="640"/>
    </location>
</feature>
<feature type="compositionally biased region" description="Polar residues" evidence="2">
    <location>
        <begin position="652"/>
        <end position="672"/>
    </location>
</feature>
<feature type="compositionally biased region" description="Polar residues" evidence="2">
    <location>
        <begin position="696"/>
        <end position="712"/>
    </location>
</feature>
<name>SLX4_UNCRE</name>
<accession>C4JJE8</accession>
<sequence length="818" mass="89414">MSFLNSSRRRTRSPSPGQIFAPSATPIVIDSSPSVPSASSILDSLLGEFSEARDPYTVEAGPTGRSSDHLFSSPGVLTQSPGRENVPPRPSERTKDAHGKDRFLVSTERNGRSPFRGNPYRSAEIHSPKGRLKAPTKEGGTRKTKKFSSSNRTLTGRSTKFLAKTASKPTQSSKVPSEIPAAKLDSLQWEDGELRLELATTRRGSWTPIKDTSIDIVDPTRNLSPSNVSAAGSQKFSSMLSDYGFTKGSTLTMENELRREVPTTKRRLELLQGTANDIFSEGDFSRPPEKSVVNPNGTHSRRSRKTTSTTITSLSTAQYGHQDSRQMSNLADFFPSGEAVERPSGAIKKLKTSKSGTKKKGVKKAKEAPLFKVASIEDALKSLEDQVCLFGTSSQLERVSSDEEPQMANFNLNAQFPRKNSRPQKTRSPCSNPKTSKSLWYASSRGYDDIEFVDMIDSSNPKTLESVEASTFVTPIDSSPMHSQVASQMVFENPCDVSHVLTKIPQTGPKDPIENPVCPEIQIRHSGNVKTQSTSGQSIPSFRGLTTAQLAQKVASFGFKPLRSREKMISLLEKCWESQQQTHIPAMLPASHTALPDSVTRAEQMSKRDTIKSRDIRASKSRSNSNHIPGLVSSTSQNTGYAAKSPDCIRGSSKSNDIGTTQGSPLLTTQSVIVIPDSDDSDNDNNPTGGAYSYPSLASNTPSSSTRTMASESLLSVRTRYEANVGEEQGSNDINQQITKAIRAQPRLVAINGVKRPTWLEKILMYDPIVLDDLTVWLNTEGLDQIGEDSEVSGTTVREWCESKGICCTWKKKRHVAP</sequence>
<keyword id="KW-0227">DNA damage</keyword>
<keyword id="KW-0233">DNA recombination</keyword>
<keyword id="KW-0234">DNA repair</keyword>
<keyword id="KW-0539">Nucleus</keyword>
<keyword id="KW-0597">Phosphoprotein</keyword>
<keyword id="KW-1185">Reference proteome</keyword>
<protein>
    <recommendedName>
        <fullName evidence="1">Structure-specific endonuclease subunit SLX4</fullName>
    </recommendedName>
</protein>
<comment type="function">
    <text evidence="1">Regulatory subunit of the SLX1-SLX4 structure-specific endonuclease that resolves DNA secondary structures generated during DNA repair and recombination. Has endonuclease activity towards branched DNA substrates, introducing single-strand cuts in duplex DNA close to junctions with ss-DNA.</text>
</comment>
<comment type="subunit">
    <text evidence="1">Forms a heterodimer with SLX1.</text>
</comment>
<comment type="subcellular location">
    <subcellularLocation>
        <location evidence="1">Nucleus</location>
    </subcellularLocation>
</comment>
<comment type="PTM">
    <text evidence="1">Phosphorylated in response to DNA damage.</text>
</comment>
<comment type="similarity">
    <text evidence="1">Belongs to the SLX4 family.</text>
</comment>
<proteinExistence type="inferred from homology"/>
<reference key="1">
    <citation type="journal article" date="2009" name="Genome Res.">
        <title>Comparative genomic analyses of the human fungal pathogens Coccidioides and their relatives.</title>
        <authorList>
            <person name="Sharpton T.J."/>
            <person name="Stajich J.E."/>
            <person name="Rounsley S.D."/>
            <person name="Gardner M.J."/>
            <person name="Wortman J.R."/>
            <person name="Jordar V.S."/>
            <person name="Maiti R."/>
            <person name="Kodira C.D."/>
            <person name="Neafsey D.E."/>
            <person name="Zeng Q."/>
            <person name="Hung C.-Y."/>
            <person name="McMahan C."/>
            <person name="Muszewska A."/>
            <person name="Grynberg M."/>
            <person name="Mandel M.A."/>
            <person name="Kellner E.M."/>
            <person name="Barker B.M."/>
            <person name="Galgiani J.N."/>
            <person name="Orbach M.J."/>
            <person name="Kirkland T.N."/>
            <person name="Cole G.T."/>
            <person name="Henn M.R."/>
            <person name="Birren B.W."/>
            <person name="Taylor J.W."/>
        </authorList>
    </citation>
    <scope>NUCLEOTIDE SEQUENCE [LARGE SCALE GENOMIC DNA]</scope>
    <source>
        <strain>UAMH 1704</strain>
    </source>
</reference>